<gene>
    <name type="ordered locus">YE2421</name>
</gene>
<dbReference type="EC" id="3.1.3.-" evidence="1"/>
<dbReference type="EMBL" id="AM286415">
    <property type="protein sequence ID" value="CAL12469.1"/>
    <property type="molecule type" value="Genomic_DNA"/>
</dbReference>
<dbReference type="RefSeq" id="WP_005161298.1">
    <property type="nucleotide sequence ID" value="NC_008800.1"/>
</dbReference>
<dbReference type="RefSeq" id="YP_001006635.1">
    <property type="nucleotide sequence ID" value="NC_008800.1"/>
</dbReference>
<dbReference type="SMR" id="A1JRR0"/>
<dbReference type="KEGG" id="yen:YE2421"/>
<dbReference type="PATRIC" id="fig|393305.7.peg.2573"/>
<dbReference type="eggNOG" id="COG1387">
    <property type="taxonomic scope" value="Bacteria"/>
</dbReference>
<dbReference type="HOGENOM" id="CLU_061999_0_1_6"/>
<dbReference type="OrthoDB" id="9808747at2"/>
<dbReference type="Proteomes" id="UP000000642">
    <property type="component" value="Chromosome"/>
</dbReference>
<dbReference type="GO" id="GO:0005829">
    <property type="term" value="C:cytosol"/>
    <property type="evidence" value="ECO:0007669"/>
    <property type="project" value="TreeGrafter"/>
</dbReference>
<dbReference type="GO" id="GO:0016791">
    <property type="term" value="F:phosphatase activity"/>
    <property type="evidence" value="ECO:0007669"/>
    <property type="project" value="UniProtKB-UniRule"/>
</dbReference>
<dbReference type="GO" id="GO:0008270">
    <property type="term" value="F:zinc ion binding"/>
    <property type="evidence" value="ECO:0007669"/>
    <property type="project" value="UniProtKB-UniRule"/>
</dbReference>
<dbReference type="GO" id="GO:0071978">
    <property type="term" value="P:bacterial-type flagellum-dependent swarming motility"/>
    <property type="evidence" value="ECO:0007669"/>
    <property type="project" value="TreeGrafter"/>
</dbReference>
<dbReference type="CDD" id="cd07437">
    <property type="entry name" value="PHP_HisPPase_Ycdx_like"/>
    <property type="match status" value="1"/>
</dbReference>
<dbReference type="FunFam" id="3.20.20.140:FF:000008">
    <property type="entry name" value="Probable phosphatase YcdX"/>
    <property type="match status" value="1"/>
</dbReference>
<dbReference type="Gene3D" id="3.20.20.140">
    <property type="entry name" value="Metal-dependent hydrolases"/>
    <property type="match status" value="1"/>
</dbReference>
<dbReference type="HAMAP" id="MF_01561">
    <property type="entry name" value="YcdX_phosphat"/>
    <property type="match status" value="1"/>
</dbReference>
<dbReference type="InterPro" id="IPR023710">
    <property type="entry name" value="Phosphatase_YcdX_put"/>
</dbReference>
<dbReference type="InterPro" id="IPR004013">
    <property type="entry name" value="PHP_dom"/>
</dbReference>
<dbReference type="InterPro" id="IPR050243">
    <property type="entry name" value="PHP_phosphatase"/>
</dbReference>
<dbReference type="InterPro" id="IPR003141">
    <property type="entry name" value="Pol/His_phosphatase_N"/>
</dbReference>
<dbReference type="InterPro" id="IPR016195">
    <property type="entry name" value="Pol/histidinol_Pase-like"/>
</dbReference>
<dbReference type="NCBIfam" id="NF006702">
    <property type="entry name" value="PRK09248.1"/>
    <property type="match status" value="1"/>
</dbReference>
<dbReference type="PANTHER" id="PTHR36928">
    <property type="entry name" value="PHOSPHATASE YCDX-RELATED"/>
    <property type="match status" value="1"/>
</dbReference>
<dbReference type="PANTHER" id="PTHR36928:SF1">
    <property type="entry name" value="PHOSPHATASE YCDX-RELATED"/>
    <property type="match status" value="1"/>
</dbReference>
<dbReference type="Pfam" id="PF02811">
    <property type="entry name" value="PHP"/>
    <property type="match status" value="1"/>
</dbReference>
<dbReference type="SMART" id="SM00481">
    <property type="entry name" value="POLIIIAc"/>
    <property type="match status" value="1"/>
</dbReference>
<dbReference type="SUPFAM" id="SSF89550">
    <property type="entry name" value="PHP domain-like"/>
    <property type="match status" value="1"/>
</dbReference>
<feature type="chain" id="PRO_1000069035" description="Probable phosphatase YE2421">
    <location>
        <begin position="1"/>
        <end position="245"/>
    </location>
</feature>
<feature type="binding site" evidence="1">
    <location>
        <position position="7"/>
    </location>
    <ligand>
        <name>Zn(2+)</name>
        <dbReference type="ChEBI" id="CHEBI:29105"/>
        <label>1</label>
    </ligand>
</feature>
<feature type="binding site" evidence="1">
    <location>
        <position position="9"/>
    </location>
    <ligand>
        <name>Zn(2+)</name>
        <dbReference type="ChEBI" id="CHEBI:29105"/>
        <label>1</label>
    </ligand>
</feature>
<feature type="binding site" evidence="1">
    <location>
        <position position="15"/>
    </location>
    <ligand>
        <name>Zn(2+)</name>
        <dbReference type="ChEBI" id="CHEBI:29105"/>
        <label>2</label>
    </ligand>
</feature>
<feature type="binding site" evidence="1">
    <location>
        <position position="40"/>
    </location>
    <ligand>
        <name>Zn(2+)</name>
        <dbReference type="ChEBI" id="CHEBI:29105"/>
        <label>2</label>
    </ligand>
</feature>
<feature type="binding site" evidence="1">
    <location>
        <position position="73"/>
    </location>
    <ligand>
        <name>Zn(2+)</name>
        <dbReference type="ChEBI" id="CHEBI:29105"/>
        <label>1</label>
    </ligand>
</feature>
<feature type="binding site" evidence="1">
    <location>
        <position position="73"/>
    </location>
    <ligand>
        <name>Zn(2+)</name>
        <dbReference type="ChEBI" id="CHEBI:29105"/>
        <label>3</label>
    </ligand>
</feature>
<feature type="binding site" evidence="1">
    <location>
        <position position="101"/>
    </location>
    <ligand>
        <name>Zn(2+)</name>
        <dbReference type="ChEBI" id="CHEBI:29105"/>
        <label>3</label>
    </ligand>
</feature>
<feature type="binding site" evidence="1">
    <location>
        <position position="131"/>
    </location>
    <ligand>
        <name>Zn(2+)</name>
        <dbReference type="ChEBI" id="CHEBI:29105"/>
        <label>3</label>
    </ligand>
</feature>
<feature type="binding site" evidence="1">
    <location>
        <position position="192"/>
    </location>
    <ligand>
        <name>Zn(2+)</name>
        <dbReference type="ChEBI" id="CHEBI:29105"/>
        <label>1</label>
    </ligand>
</feature>
<feature type="binding site" evidence="1">
    <location>
        <position position="194"/>
    </location>
    <ligand>
        <name>Zn(2+)</name>
        <dbReference type="ChEBI" id="CHEBI:29105"/>
        <label>2</label>
    </ligand>
</feature>
<reference key="1">
    <citation type="journal article" date="2006" name="PLoS Genet.">
        <title>The complete genome sequence and comparative genome analysis of the high pathogenicity Yersinia enterocolitica strain 8081.</title>
        <authorList>
            <person name="Thomson N.R."/>
            <person name="Howard S."/>
            <person name="Wren B.W."/>
            <person name="Holden M.T.G."/>
            <person name="Crossman L."/>
            <person name="Challis G.L."/>
            <person name="Churcher C."/>
            <person name="Mungall K."/>
            <person name="Brooks K."/>
            <person name="Chillingworth T."/>
            <person name="Feltwell T."/>
            <person name="Abdellah Z."/>
            <person name="Hauser H."/>
            <person name="Jagels K."/>
            <person name="Maddison M."/>
            <person name="Moule S."/>
            <person name="Sanders M."/>
            <person name="Whitehead S."/>
            <person name="Quail M.A."/>
            <person name="Dougan G."/>
            <person name="Parkhill J."/>
            <person name="Prentice M.B."/>
        </authorList>
    </citation>
    <scope>NUCLEOTIDE SEQUENCE [LARGE SCALE GENOMIC DNA]</scope>
    <source>
        <strain>NCTC 13174 / 8081</strain>
    </source>
</reference>
<sequence length="245" mass="27035">MYPVDLHMHTIASTHAYSTLHDYIAEAKLKNIKLFAITDHGPDMADAPHYWHFMNMRVWPRLVDGVGILRGIEANIKNLDGDIDCTGPMLDAIDLLIAGFHEPVFPPQDKAANTQAMIATMAQGNVHIISHPGNPKYPVDIKAIAEAAAKYNVALELNNSSFTHSRKGSETNCRAIAEAVRDAGGWLALGSDSHIAYSLGIFEHCERIIAEVNFPQERILNVSPRRLLNFLEQRGRAPIPELAGL</sequence>
<protein>
    <recommendedName>
        <fullName evidence="1">Probable phosphatase YE2421</fullName>
        <ecNumber evidence="1">3.1.3.-</ecNumber>
    </recommendedName>
</protein>
<evidence type="ECO:0000255" key="1">
    <source>
        <dbReference type="HAMAP-Rule" id="MF_01561"/>
    </source>
</evidence>
<organism>
    <name type="scientific">Yersinia enterocolitica serotype O:8 / biotype 1B (strain NCTC 13174 / 8081)</name>
    <dbReference type="NCBI Taxonomy" id="393305"/>
    <lineage>
        <taxon>Bacteria</taxon>
        <taxon>Pseudomonadati</taxon>
        <taxon>Pseudomonadota</taxon>
        <taxon>Gammaproteobacteria</taxon>
        <taxon>Enterobacterales</taxon>
        <taxon>Yersiniaceae</taxon>
        <taxon>Yersinia</taxon>
    </lineage>
</organism>
<name>Y2421_YERE8</name>
<proteinExistence type="inferred from homology"/>
<comment type="cofactor">
    <cofactor evidence="1">
        <name>Zn(2+)</name>
        <dbReference type="ChEBI" id="CHEBI:29105"/>
    </cofactor>
    <text evidence="1">Binds 3 Zn(2+) ions per subunit.</text>
</comment>
<comment type="subunit">
    <text evidence="1">Homotrimer.</text>
</comment>
<comment type="similarity">
    <text evidence="1">Belongs to the PHP family.</text>
</comment>
<keyword id="KW-0378">Hydrolase</keyword>
<keyword id="KW-0479">Metal-binding</keyword>
<keyword id="KW-0862">Zinc</keyword>
<accession>A1JRR0</accession>